<keyword id="KW-0961">Cell wall biogenesis/degradation</keyword>
<keyword id="KW-1015">Disulfide bond</keyword>
<keyword id="KW-0325">Glycoprotein</keyword>
<keyword id="KW-0326">Glycosidase</keyword>
<keyword id="KW-0378">Hydrolase</keyword>
<keyword id="KW-0677">Repeat</keyword>
<keyword id="KW-0964">Secreted</keyword>
<keyword id="KW-0732">Signal</keyword>
<keyword id="KW-0865">Zymogen</keyword>
<evidence type="ECO:0000250" key="1"/>
<evidence type="ECO:0000255" key="2"/>
<evidence type="ECO:0000255" key="3">
    <source>
        <dbReference type="PROSITE-ProRule" id="PRU10052"/>
    </source>
</evidence>
<evidence type="ECO:0000269" key="4">
    <source>
    </source>
</evidence>
<evidence type="ECO:0000305" key="5"/>
<feature type="signal peptide" evidence="2">
    <location>
        <begin position="1"/>
        <end position="21"/>
    </location>
</feature>
<feature type="propeptide" id="PRO_5000147349" evidence="2">
    <location>
        <begin position="22"/>
        <end position="32"/>
    </location>
</feature>
<feature type="chain" id="PRO_5000147350" description="Endopolygalacturonase A">
    <location>
        <begin position="33"/>
        <end position="370"/>
    </location>
</feature>
<feature type="repeat" description="PbH1 1">
    <location>
        <begin position="162"/>
        <end position="192"/>
    </location>
</feature>
<feature type="repeat" description="PbH1 2">
    <location>
        <begin position="193"/>
        <end position="214"/>
    </location>
</feature>
<feature type="repeat" description="PbH1 3">
    <location>
        <begin position="215"/>
        <end position="235"/>
    </location>
</feature>
<feature type="repeat" description="PbH1 4">
    <location>
        <begin position="244"/>
        <end position="265"/>
    </location>
</feature>
<feature type="repeat" description="PbH1 5">
    <location>
        <begin position="273"/>
        <end position="295"/>
    </location>
</feature>
<feature type="repeat" description="PbH1 6">
    <location>
        <begin position="307"/>
        <end position="328"/>
    </location>
</feature>
<feature type="active site" description="Proton donor" evidence="3">
    <location>
        <position position="207"/>
    </location>
</feature>
<feature type="active site" evidence="3">
    <location>
        <position position="229"/>
    </location>
</feature>
<feature type="glycosylation site" description="N-linked (GlcNAc...) asparagine" evidence="2">
    <location>
        <position position="246"/>
    </location>
</feature>
<feature type="disulfide bond" evidence="1">
    <location>
        <begin position="35"/>
        <end position="50"/>
    </location>
</feature>
<feature type="disulfide bond" evidence="1">
    <location>
        <begin position="209"/>
        <end position="225"/>
    </location>
</feature>
<feature type="disulfide bond" evidence="1">
    <location>
        <begin position="335"/>
        <end position="340"/>
    </location>
</feature>
<feature type="disulfide bond" evidence="1">
    <location>
        <begin position="359"/>
        <end position="368"/>
    </location>
</feature>
<proteinExistence type="evidence at protein level"/>
<protein>
    <recommendedName>
        <fullName>Endopolygalacturonase A</fullName>
        <ecNumber>3.2.1.15</ecNumber>
    </recommendedName>
    <alternativeName>
        <fullName>Pectinase A</fullName>
    </alternativeName>
    <alternativeName>
        <fullName>Polygalacturonase A</fullName>
    </alternativeName>
</protein>
<organism>
    <name type="scientific">Aspergillus niger</name>
    <dbReference type="NCBI Taxonomy" id="5061"/>
    <lineage>
        <taxon>Eukaryota</taxon>
        <taxon>Fungi</taxon>
        <taxon>Dikarya</taxon>
        <taxon>Ascomycota</taxon>
        <taxon>Pezizomycotina</taxon>
        <taxon>Eurotiomycetes</taxon>
        <taxon>Eurotiomycetidae</taxon>
        <taxon>Eurotiales</taxon>
        <taxon>Aspergillaceae</taxon>
        <taxon>Aspergillus</taxon>
        <taxon>Aspergillus subgen. Circumdati</taxon>
    </lineage>
</organism>
<sequence length="370" mass="38735">MPSAKPLFCLATLAGAALAAPAPSRVSDFTKRSTCTFTDAATASESKTSCSDIVLKDITVPAGETLNLKDLNDGTTVTFEGTTTWEYEEWDGPLLRISGKDITVTQSSDAVLDGNGAKWWDGEGTNGGKTKPKFFYAHDLDDSKISGLYIKNTPVQAISVESDNLVIEDVTIDNSDGDSEGGHNTDGFDISESTYITITGATVKNQDDCVAINSGENIYFSGGTCSGGHGLSIGSVGGRDDNTVKNVTFIDSTVSDSENGVRIKTVYDATGTVEDITYSNIQLSGISDYGIVIEQDYENGDPTGTPSNGVTISDVTLEDITGSVDSDAVEIYILCGDGSCSDWTMSGIDITGGETSSDCENVPSGASCDQ</sequence>
<reference key="1">
    <citation type="journal article" date="2000" name="Biochem. J.">
        <title>pgaA and pgaB encode two constitutively expressed endopolygalacturonases of Aspergillus niger.</title>
        <authorList>
            <person name="Parenicova L."/>
            <person name="Benen J.A."/>
            <person name="Kester H.C."/>
            <person name="Visser J."/>
        </authorList>
    </citation>
    <scope>NUCLEOTIDE SEQUENCE [GENOMIC DNA]</scope>
    <scope>FUNCTION</scope>
    <scope>BIOPHYSICOCHEMICAL PROPERTIES</scope>
    <source>
        <strain>ATCC 9029 / NRRL 3 / CBS 120.49 / DSM 2466 / N400 / FGSC 732</strain>
    </source>
</reference>
<dbReference type="EC" id="3.2.1.15"/>
<dbReference type="EMBL" id="Y18804">
    <property type="protein sequence ID" value="CAB72125.1"/>
    <property type="molecule type" value="Genomic_DNA"/>
</dbReference>
<dbReference type="RefSeq" id="XP_059604894.1">
    <property type="nucleotide sequence ID" value="XM_059745255.1"/>
</dbReference>
<dbReference type="SMR" id="Q9P4W4"/>
<dbReference type="CAZy" id="GH28">
    <property type="family name" value="Glycoside Hydrolase Family 28"/>
</dbReference>
<dbReference type="GlyCosmos" id="Q9P4W4">
    <property type="glycosylation" value="1 site, No reported glycans"/>
</dbReference>
<dbReference type="PaxDb" id="5061-CADANGAP00012918"/>
<dbReference type="GeneID" id="4989091"/>
<dbReference type="VEuPathDB" id="FungiDB:An16g06990"/>
<dbReference type="VEuPathDB" id="FungiDB:ASPNIDRAFT2_1145813"/>
<dbReference type="VEuPathDB" id="FungiDB:ATCC64974_67840"/>
<dbReference type="VEuPathDB" id="FungiDB:M747DRAFT_330493"/>
<dbReference type="eggNOG" id="ENOG502QST2">
    <property type="taxonomic scope" value="Eukaryota"/>
</dbReference>
<dbReference type="OrthoDB" id="1546079at2759"/>
<dbReference type="GO" id="GO:0005576">
    <property type="term" value="C:extracellular region"/>
    <property type="evidence" value="ECO:0007669"/>
    <property type="project" value="UniProtKB-SubCell"/>
</dbReference>
<dbReference type="GO" id="GO:0004650">
    <property type="term" value="F:polygalacturonase activity"/>
    <property type="evidence" value="ECO:0007669"/>
    <property type="project" value="UniProtKB-EC"/>
</dbReference>
<dbReference type="GO" id="GO:0071555">
    <property type="term" value="P:cell wall organization"/>
    <property type="evidence" value="ECO:0007669"/>
    <property type="project" value="UniProtKB-KW"/>
</dbReference>
<dbReference type="GO" id="GO:0045490">
    <property type="term" value="P:pectin catabolic process"/>
    <property type="evidence" value="ECO:0007669"/>
    <property type="project" value="UniProtKB-ARBA"/>
</dbReference>
<dbReference type="FunFam" id="2.160.20.10:FF:000002">
    <property type="entry name" value="Endopolygalacturonase D"/>
    <property type="match status" value="1"/>
</dbReference>
<dbReference type="Gene3D" id="2.160.20.10">
    <property type="entry name" value="Single-stranded right-handed beta-helix, Pectin lyase-like"/>
    <property type="match status" value="1"/>
</dbReference>
<dbReference type="InterPro" id="IPR000743">
    <property type="entry name" value="Glyco_hydro_28"/>
</dbReference>
<dbReference type="InterPro" id="IPR050434">
    <property type="entry name" value="Glycosyl_hydrlase_28"/>
</dbReference>
<dbReference type="InterPro" id="IPR006626">
    <property type="entry name" value="PbH1"/>
</dbReference>
<dbReference type="InterPro" id="IPR012334">
    <property type="entry name" value="Pectin_lyas_fold"/>
</dbReference>
<dbReference type="InterPro" id="IPR011050">
    <property type="entry name" value="Pectin_lyase_fold/virulence"/>
</dbReference>
<dbReference type="PANTHER" id="PTHR31884:SF13">
    <property type="entry name" value="ENDOPOLYGALACTURONASE B"/>
    <property type="match status" value="1"/>
</dbReference>
<dbReference type="PANTHER" id="PTHR31884">
    <property type="entry name" value="POLYGALACTURONASE"/>
    <property type="match status" value="1"/>
</dbReference>
<dbReference type="Pfam" id="PF00295">
    <property type="entry name" value="Glyco_hydro_28"/>
    <property type="match status" value="1"/>
</dbReference>
<dbReference type="SMART" id="SM00710">
    <property type="entry name" value="PbH1"/>
    <property type="match status" value="6"/>
</dbReference>
<dbReference type="SUPFAM" id="SSF51126">
    <property type="entry name" value="Pectin lyase-like"/>
    <property type="match status" value="1"/>
</dbReference>
<dbReference type="PROSITE" id="PS00502">
    <property type="entry name" value="POLYGALACTURONASE"/>
    <property type="match status" value="1"/>
</dbReference>
<name>PGLRA_ASPNG</name>
<comment type="function">
    <text evidence="4">Involved in maceration and soft-rotting of plant tissue. Hydrolyzes the 1,4-alpha glycosidic bonds of de-esterified pectate in the smooth region of the plant cell wall.</text>
</comment>
<comment type="catalytic activity">
    <reaction>
        <text>(1,4-alpha-D-galacturonosyl)n+m + H2O = (1,4-alpha-D-galacturonosyl)n + (1,4-alpha-D-galacturonosyl)m.</text>
        <dbReference type="EC" id="3.2.1.15"/>
    </reaction>
</comment>
<comment type="biophysicochemical properties">
    <phDependence>
        <text evidence="4">Optimum pH is 4.0.</text>
    </phDependence>
</comment>
<comment type="subcellular location">
    <subcellularLocation>
        <location evidence="5">Secreted</location>
    </subcellularLocation>
</comment>
<comment type="similarity">
    <text evidence="5">Belongs to the glycosyl hydrolase 28 family.</text>
</comment>
<gene>
    <name type="primary">pgaA</name>
    <name type="synonym">pecA</name>
</gene>
<accession>Q9P4W4</accession>